<evidence type="ECO:0000250" key="1"/>
<evidence type="ECO:0000250" key="2">
    <source>
        <dbReference type="UniProtKB" id="Q61474"/>
    </source>
</evidence>
<evidence type="ECO:0000255" key="3">
    <source>
        <dbReference type="PROSITE-ProRule" id="PRU00176"/>
    </source>
</evidence>
<evidence type="ECO:0000269" key="4">
    <source>
    </source>
</evidence>
<evidence type="ECO:0000269" key="5">
    <source>
    </source>
</evidence>
<evidence type="ECO:0000269" key="6">
    <source>
    </source>
</evidence>
<evidence type="ECO:0000305" key="7"/>
<evidence type="ECO:0007744" key="8">
    <source>
    </source>
</evidence>
<evidence type="ECO:0007744" key="9">
    <source>
    </source>
</evidence>
<feature type="chain" id="PRO_0000081649" description="RNA-binding protein Musashi homolog 1">
    <location>
        <begin position="1"/>
        <end position="362"/>
    </location>
</feature>
<feature type="domain" description="RRM 1" evidence="3">
    <location>
        <begin position="20"/>
        <end position="110"/>
    </location>
</feature>
<feature type="domain" description="RRM 2" evidence="3">
    <location>
        <begin position="109"/>
        <end position="186"/>
    </location>
</feature>
<feature type="modified residue" description="N-acetylmethionine" evidence="8 9">
    <location>
        <position position="1"/>
    </location>
</feature>
<feature type="modified residue" description="Phosphoserine" evidence="9">
    <location>
        <position position="191"/>
    </location>
</feature>
<feature type="sequence variant" id="VAR_035485" description="In a breast cancer sample; somatic mutation." evidence="5">
    <original>E</original>
    <variation>Q</variation>
    <location>
        <position position="160"/>
    </location>
</feature>
<feature type="sequence conflict" description="In Ref. 3; BAB70469." evidence="7" ref="3">
    <original>R</original>
    <variation>W</variation>
    <location>
        <position position="197"/>
    </location>
</feature>
<feature type="sequence conflict" description="In Ref. 3; BAB69769." evidence="7" ref="3">
    <original>T</original>
    <variation>S</variation>
    <location>
        <position position="225"/>
    </location>
</feature>
<feature type="sequence conflict" description="In Ref. 3; BAB69769." evidence="7" ref="3">
    <original>Y</original>
    <variation>C</variation>
    <location>
        <position position="232"/>
    </location>
</feature>
<feature type="sequence conflict" description="In Ref. 3; BAB69767." evidence="7" ref="3">
    <original>A</original>
    <variation>P</variation>
    <location>
        <position position="236"/>
    </location>
</feature>
<feature type="sequence conflict" description="In Ref. 3; BAB70469." evidence="7" ref="3">
    <original>E</original>
    <variation>K</variation>
    <location>
        <position position="245"/>
    </location>
</feature>
<protein>
    <recommendedName>
        <fullName>RNA-binding protein Musashi homolog 1</fullName>
        <shortName>Musashi-1</shortName>
    </recommendedName>
</protein>
<reference key="1">
    <citation type="journal article" date="1998" name="Genomics">
        <title>The human Musashi homolog 1 (MSI1) gene encoding the homologue of Musashi/Nrp-1, a neural RNA-binding protein putatively expressed in CNS stem cells and neural progenitor cells.</title>
        <authorList>
            <person name="Good P."/>
            <person name="Yoda A."/>
            <person name="Sakakibara S."/>
            <person name="Yamamoto A."/>
            <person name="Imai T."/>
            <person name="Sawa H."/>
            <person name="Ikeuchi T."/>
            <person name="Tsuji S."/>
            <person name="Satoh H."/>
            <person name="Okano H."/>
        </authorList>
    </citation>
    <scope>NUCLEOTIDE SEQUENCE [MRNA]</scope>
    <scope>TISSUE SPECIFICITY</scope>
    <scope>ALTERNATIVE SPLICING</scope>
    <source>
        <tissue>Fetal brain</tissue>
    </source>
</reference>
<reference key="2">
    <citation type="journal article" date="2006" name="Nature">
        <title>The finished DNA sequence of human chromosome 12.</title>
        <authorList>
            <person name="Scherer S.E."/>
            <person name="Muzny D.M."/>
            <person name="Buhay C.J."/>
            <person name="Chen R."/>
            <person name="Cree A."/>
            <person name="Ding Y."/>
            <person name="Dugan-Rocha S."/>
            <person name="Gill R."/>
            <person name="Gunaratne P."/>
            <person name="Harris R.A."/>
            <person name="Hawes A.C."/>
            <person name="Hernandez J."/>
            <person name="Hodgson A.V."/>
            <person name="Hume J."/>
            <person name="Jackson A."/>
            <person name="Khan Z.M."/>
            <person name="Kovar-Smith C."/>
            <person name="Lewis L.R."/>
            <person name="Lozado R.J."/>
            <person name="Metzker M.L."/>
            <person name="Milosavljevic A."/>
            <person name="Miner G.R."/>
            <person name="Montgomery K.T."/>
            <person name="Morgan M.B."/>
            <person name="Nazareth L.V."/>
            <person name="Scott G."/>
            <person name="Sodergren E."/>
            <person name="Song X.-Z."/>
            <person name="Steffen D."/>
            <person name="Lovering R.C."/>
            <person name="Wheeler D.A."/>
            <person name="Worley K.C."/>
            <person name="Yuan Y."/>
            <person name="Zhang Z."/>
            <person name="Adams C.Q."/>
            <person name="Ansari-Lari M.A."/>
            <person name="Ayele M."/>
            <person name="Brown M.J."/>
            <person name="Chen G."/>
            <person name="Chen Z."/>
            <person name="Clerc-Blankenburg K.P."/>
            <person name="Davis C."/>
            <person name="Delgado O."/>
            <person name="Dinh H.H."/>
            <person name="Draper H."/>
            <person name="Gonzalez-Garay M.L."/>
            <person name="Havlak P."/>
            <person name="Jackson L.R."/>
            <person name="Jacob L.S."/>
            <person name="Kelly S.H."/>
            <person name="Li L."/>
            <person name="Li Z."/>
            <person name="Liu J."/>
            <person name="Liu W."/>
            <person name="Lu J."/>
            <person name="Maheshwari M."/>
            <person name="Nguyen B.-V."/>
            <person name="Okwuonu G.O."/>
            <person name="Pasternak S."/>
            <person name="Perez L.M."/>
            <person name="Plopper F.J.H."/>
            <person name="Santibanez J."/>
            <person name="Shen H."/>
            <person name="Tabor P.E."/>
            <person name="Verduzco D."/>
            <person name="Waldron L."/>
            <person name="Wang Q."/>
            <person name="Williams G.A."/>
            <person name="Zhang J."/>
            <person name="Zhou J."/>
            <person name="Allen C.C."/>
            <person name="Amin A.G."/>
            <person name="Anyalebechi V."/>
            <person name="Bailey M."/>
            <person name="Barbaria J.A."/>
            <person name="Bimage K.E."/>
            <person name="Bryant N.P."/>
            <person name="Burch P.E."/>
            <person name="Burkett C.E."/>
            <person name="Burrell K.L."/>
            <person name="Calderon E."/>
            <person name="Cardenas V."/>
            <person name="Carter K."/>
            <person name="Casias K."/>
            <person name="Cavazos I."/>
            <person name="Cavazos S.R."/>
            <person name="Ceasar H."/>
            <person name="Chacko J."/>
            <person name="Chan S.N."/>
            <person name="Chavez D."/>
            <person name="Christopoulos C."/>
            <person name="Chu J."/>
            <person name="Cockrell R."/>
            <person name="Cox C.D."/>
            <person name="Dang M."/>
            <person name="Dathorne S.R."/>
            <person name="David R."/>
            <person name="Davis C.M."/>
            <person name="Davy-Carroll L."/>
            <person name="Deshazo D.R."/>
            <person name="Donlin J.E."/>
            <person name="D'Souza L."/>
            <person name="Eaves K.A."/>
            <person name="Egan A."/>
            <person name="Emery-Cohen A.J."/>
            <person name="Escotto M."/>
            <person name="Flagg N."/>
            <person name="Forbes L.D."/>
            <person name="Gabisi A.M."/>
            <person name="Garza M."/>
            <person name="Hamilton C."/>
            <person name="Henderson N."/>
            <person name="Hernandez O."/>
            <person name="Hines S."/>
            <person name="Hogues M.E."/>
            <person name="Huang M."/>
            <person name="Idlebird D.G."/>
            <person name="Johnson R."/>
            <person name="Jolivet A."/>
            <person name="Jones S."/>
            <person name="Kagan R."/>
            <person name="King L.M."/>
            <person name="Leal B."/>
            <person name="Lebow H."/>
            <person name="Lee S."/>
            <person name="LeVan J.M."/>
            <person name="Lewis L.C."/>
            <person name="London P."/>
            <person name="Lorensuhewa L.M."/>
            <person name="Loulseged H."/>
            <person name="Lovett D.A."/>
            <person name="Lucier A."/>
            <person name="Lucier R.L."/>
            <person name="Ma J."/>
            <person name="Madu R.C."/>
            <person name="Mapua P."/>
            <person name="Martindale A.D."/>
            <person name="Martinez E."/>
            <person name="Massey E."/>
            <person name="Mawhiney S."/>
            <person name="Meador M.G."/>
            <person name="Mendez S."/>
            <person name="Mercado C."/>
            <person name="Mercado I.C."/>
            <person name="Merritt C.E."/>
            <person name="Miner Z.L."/>
            <person name="Minja E."/>
            <person name="Mitchell T."/>
            <person name="Mohabbat F."/>
            <person name="Mohabbat K."/>
            <person name="Montgomery B."/>
            <person name="Moore N."/>
            <person name="Morris S."/>
            <person name="Munidasa M."/>
            <person name="Ngo R.N."/>
            <person name="Nguyen N.B."/>
            <person name="Nickerson E."/>
            <person name="Nwaokelemeh O.O."/>
            <person name="Nwokenkwo S."/>
            <person name="Obregon M."/>
            <person name="Oguh M."/>
            <person name="Oragunye N."/>
            <person name="Oviedo R.J."/>
            <person name="Parish B.J."/>
            <person name="Parker D.N."/>
            <person name="Parrish J."/>
            <person name="Parks K.L."/>
            <person name="Paul H.A."/>
            <person name="Payton B.A."/>
            <person name="Perez A."/>
            <person name="Perrin W."/>
            <person name="Pickens A."/>
            <person name="Primus E.L."/>
            <person name="Pu L.-L."/>
            <person name="Puazo M."/>
            <person name="Quiles M.M."/>
            <person name="Quiroz J.B."/>
            <person name="Rabata D."/>
            <person name="Reeves K."/>
            <person name="Ruiz S.J."/>
            <person name="Shao H."/>
            <person name="Sisson I."/>
            <person name="Sonaike T."/>
            <person name="Sorelle R.P."/>
            <person name="Sutton A.E."/>
            <person name="Svatek A.F."/>
            <person name="Svetz L.A."/>
            <person name="Tamerisa K.S."/>
            <person name="Taylor T.R."/>
            <person name="Teague B."/>
            <person name="Thomas N."/>
            <person name="Thorn R.D."/>
            <person name="Trejos Z.Y."/>
            <person name="Trevino B.K."/>
            <person name="Ukegbu O.N."/>
            <person name="Urban J.B."/>
            <person name="Vasquez L.I."/>
            <person name="Vera V.A."/>
            <person name="Villasana D.M."/>
            <person name="Wang L."/>
            <person name="Ward-Moore S."/>
            <person name="Warren J.T."/>
            <person name="Wei X."/>
            <person name="White F."/>
            <person name="Williamson A.L."/>
            <person name="Wleczyk R."/>
            <person name="Wooden H.S."/>
            <person name="Wooden S.H."/>
            <person name="Yen J."/>
            <person name="Yoon L."/>
            <person name="Yoon V."/>
            <person name="Zorrilla S.E."/>
            <person name="Nelson D."/>
            <person name="Kucherlapati R."/>
            <person name="Weinstock G."/>
            <person name="Gibbs R.A."/>
        </authorList>
    </citation>
    <scope>NUCLEOTIDE SEQUENCE [LARGE SCALE GENOMIC DNA]</scope>
</reference>
<reference key="3">
    <citation type="journal article" date="2002" name="Biochem. Biophys. Res. Commun.">
        <title>Expression of the Musashi1 gene encoding the RNA-binding protein in human hepatoma cell lines.</title>
        <authorList>
            <person name="Shu H.-J."/>
            <person name="Saito T."/>
            <person name="Watanabe H."/>
            <person name="Ito J."/>
            <person name="Takeda H."/>
            <person name="Okano H."/>
            <person name="Kawata S."/>
        </authorList>
    </citation>
    <scope>NUCLEOTIDE SEQUENCE [MRNA] OF 64-245</scope>
    <scope>TISSUE SPECIFICITY</scope>
</reference>
<reference key="4">
    <citation type="journal article" date="2002" name="J. Cell Sci.">
        <title>Musashi: a translational regulator of cell fate.</title>
        <authorList>
            <person name="Okano H."/>
            <person name="Imai T."/>
            <person name="Okabe M."/>
        </authorList>
    </citation>
    <scope>REVIEW</scope>
</reference>
<reference key="5">
    <citation type="journal article" date="2009" name="Anal. Chem.">
        <title>Lys-N and trypsin cover complementary parts of the phosphoproteome in a refined SCX-based approach.</title>
        <authorList>
            <person name="Gauci S."/>
            <person name="Helbig A.O."/>
            <person name="Slijper M."/>
            <person name="Krijgsveld J."/>
            <person name="Heck A.J."/>
            <person name="Mohammed S."/>
        </authorList>
    </citation>
    <scope>ACETYLATION [LARGE SCALE ANALYSIS] AT MET-1</scope>
    <scope>IDENTIFICATION BY MASS SPECTROMETRY [LARGE SCALE ANALYSIS]</scope>
</reference>
<reference key="6">
    <citation type="journal article" date="2011" name="BMC Syst. Biol.">
        <title>Initial characterization of the human central proteome.</title>
        <authorList>
            <person name="Burkard T.R."/>
            <person name="Planyavsky M."/>
            <person name="Kaupe I."/>
            <person name="Breitwieser F.P."/>
            <person name="Buerckstuemmer T."/>
            <person name="Bennett K.L."/>
            <person name="Superti-Furga G."/>
            <person name="Colinge J."/>
        </authorList>
    </citation>
    <scope>IDENTIFICATION BY MASS SPECTROMETRY [LARGE SCALE ANALYSIS]</scope>
</reference>
<reference key="7">
    <citation type="journal article" date="2011" name="Sci. Signal.">
        <title>System-wide temporal characterization of the proteome and phosphoproteome of human embryonic stem cell differentiation.</title>
        <authorList>
            <person name="Rigbolt K.T."/>
            <person name="Prokhorova T.A."/>
            <person name="Akimov V."/>
            <person name="Henningsen J."/>
            <person name="Johansen P.T."/>
            <person name="Kratchmarova I."/>
            <person name="Kassem M."/>
            <person name="Mann M."/>
            <person name="Olsen J.V."/>
            <person name="Blagoev B."/>
        </authorList>
    </citation>
    <scope>ACETYLATION [LARGE SCALE ANALYSIS] AT MET-1</scope>
    <scope>PHOSPHORYLATION [LARGE SCALE ANALYSIS] AT SER-191</scope>
    <scope>IDENTIFICATION BY MASS SPECTROMETRY [LARGE SCALE ANALYSIS]</scope>
</reference>
<reference key="8">
    <citation type="journal article" date="2006" name="Science">
        <title>The consensus coding sequences of human breast and colorectal cancers.</title>
        <authorList>
            <person name="Sjoeblom T."/>
            <person name="Jones S."/>
            <person name="Wood L.D."/>
            <person name="Parsons D.W."/>
            <person name="Lin J."/>
            <person name="Barber T.D."/>
            <person name="Mandelker D."/>
            <person name="Leary R.J."/>
            <person name="Ptak J."/>
            <person name="Silliman N."/>
            <person name="Szabo S."/>
            <person name="Buckhaults P."/>
            <person name="Farrell C."/>
            <person name="Meeh P."/>
            <person name="Markowitz S.D."/>
            <person name="Willis J."/>
            <person name="Dawson D."/>
            <person name="Willson J.K.V."/>
            <person name="Gazdar A.F."/>
            <person name="Hartigan J."/>
            <person name="Wu L."/>
            <person name="Liu C."/>
            <person name="Parmigiani G."/>
            <person name="Park B.H."/>
            <person name="Bachman K.E."/>
            <person name="Papadopoulos N."/>
            <person name="Vogelstein B."/>
            <person name="Kinzler K.W."/>
            <person name="Velculescu V.E."/>
        </authorList>
    </citation>
    <scope>VARIANT [LARGE SCALE ANALYSIS] GLN-160</scope>
</reference>
<comment type="function">
    <text evidence="1">RNA binding protein that regulates the expression of target mRNAs at the translation level. Regulates expression of the NOTCH1 antagonist NUMB. Binds RNA containing the sequence 5'-GUUAGUUAGUUAGUU-3' and other sequences containing the pattern 5'-[GA]U(1-3)AGU-3'. May play a role in the proliferation and maintenance of stem cells in the central nervous system (By similarity).</text>
</comment>
<comment type="interaction">
    <interactant intactId="EBI-726515">
        <id>O43347</id>
    </interactant>
    <interactant intactId="EBI-352986">
        <id>P52597</id>
        <label>HNRNPF</label>
    </interactant>
    <organismsDiffer>false</organismsDiffer>
    <experiments>3</experiments>
</comment>
<comment type="interaction">
    <interactant intactId="EBI-726515">
        <id>O43347</id>
    </interactant>
    <interactant intactId="EBI-352823">
        <id>P55795</id>
        <label>HNRNPH2</label>
    </interactant>
    <organismsDiffer>false</organismsDiffer>
    <experiments>5</experiments>
</comment>
<comment type="interaction">
    <interactant intactId="EBI-726515">
        <id>O43347</id>
    </interactant>
    <interactant intactId="EBI-366233">
        <id>P10636-8</id>
        <label>MAPT</label>
    </interactant>
    <organismsDiffer>false</organismsDiffer>
    <experiments>2</experiments>
</comment>
<comment type="interaction">
    <interactant intactId="EBI-726515">
        <id>O43347</id>
    </interactant>
    <interactant intactId="EBI-726515">
        <id>O43347</id>
        <label>MSI1</label>
    </interactant>
    <organismsDiffer>false</organismsDiffer>
    <experiments>2</experiments>
</comment>
<comment type="subcellular location">
    <subcellularLocation>
        <location evidence="2">Cytoplasm</location>
    </subcellularLocation>
    <subcellularLocation>
        <location evidence="2">Nucleus</location>
    </subcellularLocation>
</comment>
<comment type="tissue specificity">
    <text evidence="4 6">Detected in fetal kidney, brain, liver and lung, and in adult brain and pancreas. Detected in hepatoma cell lines.</text>
</comment>
<comment type="domain">
    <text evidence="1">The first RNA recognition motif binds more strongly to RNA compared to the second one.</text>
</comment>
<comment type="similarity">
    <text evidence="7">Belongs to the Musashi family.</text>
</comment>
<keyword id="KW-0007">Acetylation</keyword>
<keyword id="KW-0963">Cytoplasm</keyword>
<keyword id="KW-0539">Nucleus</keyword>
<keyword id="KW-0597">Phosphoprotein</keyword>
<keyword id="KW-1267">Proteomics identification</keyword>
<keyword id="KW-1185">Reference proteome</keyword>
<keyword id="KW-0677">Repeat</keyword>
<keyword id="KW-0694">RNA-binding</keyword>
<sequence length="362" mass="39125">METDAPQPGLASPDSPHDPCKMFIGGLSWQTTQEGLREYFGQFGEVKECLVMRDPLTKRSRGFGFVTFMDQAGVDKVLAQSRHELDSKTIDPKVAFPRRAQPKMVTRTKKIFVGGLSVNTTVEDVKQYFEQFGKVDDAMLMFDKTTNRHRGFGFVTFESEDIVEKVCEIHFHEINNKMVECKKAQPKEVMSPTGSARGRSRVMPYGMDAFMLGIGMLGYPGFQATTYASRSYTGLAPGYTYQFPEFRVERTPLPSAPVLPELTAIPLTAYGPMAAAAAAAAVVRGTGSHPWTMAPPPGSTPSRTGGFLGTTSPGPMAELYGAANQDSGVSSYISAASPAPSTGFGHSLGGPLIATAFTNGYH</sequence>
<dbReference type="EMBL" id="AB012851">
    <property type="protein sequence ID" value="BAA33962.1"/>
    <property type="molecule type" value="mRNA"/>
</dbReference>
<dbReference type="EMBL" id="AC003982">
    <property type="protein sequence ID" value="AAB95636.1"/>
    <property type="molecule type" value="Genomic_DNA"/>
</dbReference>
<dbReference type="EMBL" id="AB072590">
    <property type="protein sequence ID" value="BAB69767.1"/>
    <property type="molecule type" value="mRNA"/>
</dbReference>
<dbReference type="EMBL" id="AB072591">
    <property type="protein sequence ID" value="BAB69768.1"/>
    <property type="molecule type" value="mRNA"/>
</dbReference>
<dbReference type="EMBL" id="AB072592">
    <property type="protein sequence ID" value="BAB69769.1"/>
    <property type="molecule type" value="mRNA"/>
</dbReference>
<dbReference type="EMBL" id="AB073212">
    <property type="protein sequence ID" value="BAB70469.1"/>
    <property type="molecule type" value="mRNA"/>
</dbReference>
<dbReference type="CCDS" id="CCDS9196.1"/>
<dbReference type="RefSeq" id="NP_002433.1">
    <property type="nucleotide sequence ID" value="NM_002442.4"/>
</dbReference>
<dbReference type="RefSeq" id="XP_011536663.1">
    <property type="nucleotide sequence ID" value="XM_011538361.4"/>
</dbReference>
<dbReference type="RefSeq" id="XP_054228056.1">
    <property type="nucleotide sequence ID" value="XM_054372081.1"/>
</dbReference>
<dbReference type="SMR" id="O43347"/>
<dbReference type="BioGRID" id="110577">
    <property type="interactions" value="142"/>
</dbReference>
<dbReference type="FunCoup" id="O43347">
    <property type="interactions" value="558"/>
</dbReference>
<dbReference type="IntAct" id="O43347">
    <property type="interactions" value="60"/>
</dbReference>
<dbReference type="MINT" id="O43347"/>
<dbReference type="STRING" id="9606.ENSP00000257552"/>
<dbReference type="GlyCosmos" id="O43347">
    <property type="glycosylation" value="2 sites, 1 glycan"/>
</dbReference>
<dbReference type="GlyGen" id="O43347">
    <property type="glycosylation" value="4 sites, 1 O-linked glycan (3 sites)"/>
</dbReference>
<dbReference type="iPTMnet" id="O43347"/>
<dbReference type="PhosphoSitePlus" id="O43347"/>
<dbReference type="SwissPalm" id="O43347"/>
<dbReference type="BioMuta" id="MSI1"/>
<dbReference type="jPOST" id="O43347"/>
<dbReference type="MassIVE" id="O43347"/>
<dbReference type="PaxDb" id="9606-ENSP00000257552"/>
<dbReference type="PeptideAtlas" id="O43347"/>
<dbReference type="ProteomicsDB" id="48907"/>
<dbReference type="Pumba" id="O43347"/>
<dbReference type="Antibodypedia" id="18945">
    <property type="antibodies" value="667 antibodies from 41 providers"/>
</dbReference>
<dbReference type="DNASU" id="4440"/>
<dbReference type="Ensembl" id="ENST00000257552.7">
    <property type="protein sequence ID" value="ENSP00000257552.2"/>
    <property type="gene ID" value="ENSG00000135097.7"/>
</dbReference>
<dbReference type="GeneID" id="4440"/>
<dbReference type="KEGG" id="hsa:4440"/>
<dbReference type="MANE-Select" id="ENST00000257552.7">
    <property type="protein sequence ID" value="ENSP00000257552.2"/>
    <property type="RefSeq nucleotide sequence ID" value="NM_002442.4"/>
    <property type="RefSeq protein sequence ID" value="NP_002433.1"/>
</dbReference>
<dbReference type="UCSC" id="uc001tye.2">
    <property type="organism name" value="human"/>
</dbReference>
<dbReference type="AGR" id="HGNC:7330"/>
<dbReference type="CTD" id="4440"/>
<dbReference type="DisGeNET" id="4440"/>
<dbReference type="GeneCards" id="MSI1"/>
<dbReference type="HGNC" id="HGNC:7330">
    <property type="gene designation" value="MSI1"/>
</dbReference>
<dbReference type="HPA" id="ENSG00000135097">
    <property type="expression patterns" value="Tissue enriched (retina)"/>
</dbReference>
<dbReference type="MIM" id="603328">
    <property type="type" value="gene"/>
</dbReference>
<dbReference type="neXtProt" id="NX_O43347"/>
<dbReference type="OpenTargets" id="ENSG00000135097"/>
<dbReference type="PharmGKB" id="PA31137"/>
<dbReference type="VEuPathDB" id="HostDB:ENSG00000135097"/>
<dbReference type="eggNOG" id="KOG4205">
    <property type="taxonomic scope" value="Eukaryota"/>
</dbReference>
<dbReference type="GeneTree" id="ENSGT00940000156515"/>
<dbReference type="InParanoid" id="O43347"/>
<dbReference type="OMA" id="GINARRE"/>
<dbReference type="OrthoDB" id="1875751at2759"/>
<dbReference type="PAN-GO" id="O43347">
    <property type="GO annotations" value="5 GO annotations based on evolutionary models"/>
</dbReference>
<dbReference type="PhylomeDB" id="O43347"/>
<dbReference type="TreeFam" id="TF325419"/>
<dbReference type="PathwayCommons" id="O43347"/>
<dbReference type="Reactome" id="R-HSA-9010553">
    <property type="pathway name" value="Regulation of expression of SLITs and ROBOs"/>
</dbReference>
<dbReference type="SignaLink" id="O43347"/>
<dbReference type="SIGNOR" id="O43347"/>
<dbReference type="BioGRID-ORCS" id="4440">
    <property type="hits" value="18 hits in 1156 CRISPR screens"/>
</dbReference>
<dbReference type="CD-CODE" id="232F8A39">
    <property type="entry name" value="P-body"/>
</dbReference>
<dbReference type="CD-CODE" id="DEE660B4">
    <property type="entry name" value="Stress granule"/>
</dbReference>
<dbReference type="ChiTaRS" id="MSI1">
    <property type="organism name" value="human"/>
</dbReference>
<dbReference type="GeneWiki" id="MSI1"/>
<dbReference type="GenomeRNAi" id="4440"/>
<dbReference type="Pharos" id="O43347">
    <property type="development level" value="Tbio"/>
</dbReference>
<dbReference type="PRO" id="PR:O43347"/>
<dbReference type="Proteomes" id="UP000005640">
    <property type="component" value="Chromosome 12"/>
</dbReference>
<dbReference type="RNAct" id="O43347">
    <property type="molecule type" value="protein"/>
</dbReference>
<dbReference type="Bgee" id="ENSG00000135097">
    <property type="expression patterns" value="Expressed in ventricular zone and 113 other cell types or tissues"/>
</dbReference>
<dbReference type="ExpressionAtlas" id="O43347">
    <property type="expression patterns" value="baseline and differential"/>
</dbReference>
<dbReference type="GO" id="GO:0005737">
    <property type="term" value="C:cytoplasm"/>
    <property type="evidence" value="ECO:0000318"/>
    <property type="project" value="GO_Central"/>
</dbReference>
<dbReference type="GO" id="GO:0005634">
    <property type="term" value="C:nucleus"/>
    <property type="evidence" value="ECO:0007669"/>
    <property type="project" value="UniProtKB-SubCell"/>
</dbReference>
<dbReference type="GO" id="GO:0042802">
    <property type="term" value="F:identical protein binding"/>
    <property type="evidence" value="ECO:0000353"/>
    <property type="project" value="IntAct"/>
</dbReference>
<dbReference type="GO" id="GO:0140693">
    <property type="term" value="F:molecular condensate scaffold activity"/>
    <property type="evidence" value="ECO:0007669"/>
    <property type="project" value="Ensembl"/>
</dbReference>
<dbReference type="GO" id="GO:0003729">
    <property type="term" value="F:mRNA binding"/>
    <property type="evidence" value="ECO:0000318"/>
    <property type="project" value="GO_Central"/>
</dbReference>
<dbReference type="GO" id="GO:0008266">
    <property type="term" value="F:poly(U) RNA binding"/>
    <property type="evidence" value="ECO:0007669"/>
    <property type="project" value="Ensembl"/>
</dbReference>
<dbReference type="GO" id="GO:0042803">
    <property type="term" value="F:protein homodimerization activity"/>
    <property type="evidence" value="ECO:0007669"/>
    <property type="project" value="Ensembl"/>
</dbReference>
<dbReference type="GO" id="GO:0003723">
    <property type="term" value="F:RNA binding"/>
    <property type="evidence" value="ECO:0007005"/>
    <property type="project" value="UniProtKB"/>
</dbReference>
<dbReference type="GO" id="GO:0007417">
    <property type="term" value="P:central nervous system development"/>
    <property type="evidence" value="ECO:0000318"/>
    <property type="project" value="GO_Central"/>
</dbReference>
<dbReference type="GO" id="GO:0030855">
    <property type="term" value="P:epithelial cell differentiation"/>
    <property type="evidence" value="ECO:0007669"/>
    <property type="project" value="Ensembl"/>
</dbReference>
<dbReference type="GO" id="GO:0007399">
    <property type="term" value="P:nervous system development"/>
    <property type="evidence" value="ECO:0000304"/>
    <property type="project" value="ProtInc"/>
</dbReference>
<dbReference type="GO" id="GO:0006417">
    <property type="term" value="P:regulation of translation"/>
    <property type="evidence" value="ECO:0000318"/>
    <property type="project" value="GO_Central"/>
</dbReference>
<dbReference type="GO" id="GO:0009725">
    <property type="term" value="P:response to hormone"/>
    <property type="evidence" value="ECO:0007669"/>
    <property type="project" value="Ensembl"/>
</dbReference>
<dbReference type="CDD" id="cd12576">
    <property type="entry name" value="RRM1_MSI"/>
    <property type="match status" value="1"/>
</dbReference>
<dbReference type="CDD" id="cd12323">
    <property type="entry name" value="RRM2_MSI"/>
    <property type="match status" value="1"/>
</dbReference>
<dbReference type="FunFam" id="3.30.70.330:FF:000596">
    <property type="entry name" value="RNA-binding protein Musashi homolog 1"/>
    <property type="match status" value="1"/>
</dbReference>
<dbReference type="FunFam" id="3.30.70.330:FF:000020">
    <property type="entry name" value="RNA-binding protein Musashi homolog 2 isoform X1"/>
    <property type="match status" value="1"/>
</dbReference>
<dbReference type="Gene3D" id="3.30.70.330">
    <property type="match status" value="2"/>
</dbReference>
<dbReference type="InterPro" id="IPR034126">
    <property type="entry name" value="MSI_RRM2"/>
</dbReference>
<dbReference type="InterPro" id="IPR012677">
    <property type="entry name" value="Nucleotide-bd_a/b_plait_sf"/>
</dbReference>
<dbReference type="InterPro" id="IPR035979">
    <property type="entry name" value="RBD_domain_sf"/>
</dbReference>
<dbReference type="InterPro" id="IPR000504">
    <property type="entry name" value="RRM_dom"/>
</dbReference>
<dbReference type="PANTHER" id="PTHR48032:SF3">
    <property type="entry name" value="RNA-BINDING PROTEIN MUSASHI HOMOLOG 1"/>
    <property type="match status" value="1"/>
</dbReference>
<dbReference type="PANTHER" id="PTHR48032">
    <property type="entry name" value="RNA-BINDING PROTEIN MUSASHI HOMOLOG RBP6"/>
    <property type="match status" value="1"/>
</dbReference>
<dbReference type="Pfam" id="PF00076">
    <property type="entry name" value="RRM_1"/>
    <property type="match status" value="2"/>
</dbReference>
<dbReference type="SMART" id="SM00360">
    <property type="entry name" value="RRM"/>
    <property type="match status" value="2"/>
</dbReference>
<dbReference type="SUPFAM" id="SSF54928">
    <property type="entry name" value="RNA-binding domain, RBD"/>
    <property type="match status" value="2"/>
</dbReference>
<dbReference type="PROSITE" id="PS50102">
    <property type="entry name" value="RRM"/>
    <property type="match status" value="2"/>
</dbReference>
<proteinExistence type="evidence at protein level"/>
<organism>
    <name type="scientific">Homo sapiens</name>
    <name type="common">Human</name>
    <dbReference type="NCBI Taxonomy" id="9606"/>
    <lineage>
        <taxon>Eukaryota</taxon>
        <taxon>Metazoa</taxon>
        <taxon>Chordata</taxon>
        <taxon>Craniata</taxon>
        <taxon>Vertebrata</taxon>
        <taxon>Euteleostomi</taxon>
        <taxon>Mammalia</taxon>
        <taxon>Eutheria</taxon>
        <taxon>Euarchontoglires</taxon>
        <taxon>Primates</taxon>
        <taxon>Haplorrhini</taxon>
        <taxon>Catarrhini</taxon>
        <taxon>Hominidae</taxon>
        <taxon>Homo</taxon>
    </lineage>
</organism>
<gene>
    <name type="primary">MSI1</name>
</gene>
<accession>O43347</accession>
<accession>Q96PU0</accession>
<accession>Q96PU1</accession>
<accession>Q96PU2</accession>
<accession>Q96PU3</accession>
<name>MSI1H_HUMAN</name>